<comment type="function">
    <text evidence="1">Involved in the biosynthesis of a nickel-pincer cofactor ((SCS)Ni(II) pincer complex). Binds Ni(2+), and functions in nickel delivery to pyridinium-3,5-bisthiocarboxylic acid mononucleotide (P2TMN), to form the mature cofactor. Is thus probably required for the activation of nickel-pincer cofactor-dependent enzymes.</text>
</comment>
<comment type="catalytic activity">
    <reaction evidence="1">
        <text>Ni(II)-pyridinium-3,5-bisthiocarboxylate mononucleotide = pyridinium-3,5-bisthiocarboxylate mononucleotide + Ni(2+)</text>
        <dbReference type="Rhea" id="RHEA:54784"/>
        <dbReference type="ChEBI" id="CHEBI:49786"/>
        <dbReference type="ChEBI" id="CHEBI:137372"/>
        <dbReference type="ChEBI" id="CHEBI:137373"/>
        <dbReference type="EC" id="4.99.1.12"/>
    </reaction>
</comment>
<comment type="similarity">
    <text evidence="1">Belongs to the LarC family.</text>
</comment>
<organism>
    <name type="scientific">Desulfitobacterium hafniense (strain DSM 10664 / DCB-2)</name>
    <dbReference type="NCBI Taxonomy" id="272564"/>
    <lineage>
        <taxon>Bacteria</taxon>
        <taxon>Bacillati</taxon>
        <taxon>Bacillota</taxon>
        <taxon>Clostridia</taxon>
        <taxon>Eubacteriales</taxon>
        <taxon>Desulfitobacteriaceae</taxon>
        <taxon>Desulfitobacterium</taxon>
    </lineage>
</organism>
<keyword id="KW-0456">Lyase</keyword>
<keyword id="KW-0533">Nickel</keyword>
<feature type="chain" id="PRO_1000149768" description="Pyridinium-3,5-bisthiocarboxylic acid mononucleotide nickel insertion protein">
    <location>
        <begin position="1"/>
        <end position="402"/>
    </location>
</feature>
<gene>
    <name evidence="1" type="primary">larC</name>
    <name type="ordered locus">Dhaf_3339</name>
</gene>
<proteinExistence type="inferred from homology"/>
<dbReference type="EC" id="4.99.1.12" evidence="1"/>
<dbReference type="EMBL" id="CP001336">
    <property type="protein sequence ID" value="ACL21357.1"/>
    <property type="molecule type" value="Genomic_DNA"/>
</dbReference>
<dbReference type="RefSeq" id="WP_015944549.1">
    <property type="nucleotide sequence ID" value="NC_011830.1"/>
</dbReference>
<dbReference type="SMR" id="B8G2K7"/>
<dbReference type="KEGG" id="dhd:Dhaf_3339"/>
<dbReference type="HOGENOM" id="CLU_028523_2_1_9"/>
<dbReference type="Proteomes" id="UP000007726">
    <property type="component" value="Chromosome"/>
</dbReference>
<dbReference type="GO" id="GO:0016829">
    <property type="term" value="F:lyase activity"/>
    <property type="evidence" value="ECO:0007669"/>
    <property type="project" value="UniProtKB-UniRule"/>
</dbReference>
<dbReference type="GO" id="GO:0016151">
    <property type="term" value="F:nickel cation binding"/>
    <property type="evidence" value="ECO:0007669"/>
    <property type="project" value="UniProtKB-UniRule"/>
</dbReference>
<dbReference type="GO" id="GO:0051604">
    <property type="term" value="P:protein maturation"/>
    <property type="evidence" value="ECO:0007669"/>
    <property type="project" value="UniProtKB-UniRule"/>
</dbReference>
<dbReference type="Gene3D" id="3.10.20.300">
    <property type="entry name" value="mk0293 like domain"/>
    <property type="match status" value="1"/>
</dbReference>
<dbReference type="Gene3D" id="3.30.70.1380">
    <property type="entry name" value="Transcriptional regulatory protein pf0864 domain like"/>
    <property type="match status" value="1"/>
</dbReference>
<dbReference type="HAMAP" id="MF_01074">
    <property type="entry name" value="LarC"/>
    <property type="match status" value="1"/>
</dbReference>
<dbReference type="InterPro" id="IPR002822">
    <property type="entry name" value="Ni_insertion"/>
</dbReference>
<dbReference type="NCBIfam" id="TIGR00299">
    <property type="entry name" value="nickel pincer cofactor biosynthesis protein LarC"/>
    <property type="match status" value="1"/>
</dbReference>
<dbReference type="PANTHER" id="PTHR36566">
    <property type="entry name" value="NICKEL INSERTION PROTEIN-RELATED"/>
    <property type="match status" value="1"/>
</dbReference>
<dbReference type="PANTHER" id="PTHR36566:SF1">
    <property type="entry name" value="PYRIDINIUM-3,5-BISTHIOCARBOXYLIC ACID MONONUCLEOTIDE NICKEL INSERTION PROTEIN"/>
    <property type="match status" value="1"/>
</dbReference>
<dbReference type="Pfam" id="PF01969">
    <property type="entry name" value="Ni_insertion"/>
    <property type="match status" value="1"/>
</dbReference>
<sequence>MKAAYLDCFSGISGDMLLGALVDAGLDFNLLQRDLAGLDLDEYELYEQKVLKQGIRGTQIHVHALEGHVHRHLSDIQAIIGRSALPPQVKEKSLEIFTRLGKAEAKIHGTDIEQIHFHEVGAVDAIVDIVGAVIGFWRLGIEKVFASPIHVGKGFVKAAHGLLPVPAPATLELLTGVPIYAQDVEGELATPTGAAIVTAYCREFGPFPKIRVERVGYGAGVKDLTIPNLLRLTVGELADEDKGQEGIREGEALTLEVNIDDMNPECYDYLFEKLFQAGAMDVYIQTIQMKKNRPAVLLTVQTPYHKLEEMRKILFQETTTIGLRVYPIKKYMLPYELFTVETNYGSAKVKVAFMEGRACTVSPEYEDCRRLARLTGEPLKQIYEEIKEKAKILLYSTKYPID</sequence>
<evidence type="ECO:0000255" key="1">
    <source>
        <dbReference type="HAMAP-Rule" id="MF_01074"/>
    </source>
</evidence>
<accession>B8G2K7</accession>
<name>LARC_DESHD</name>
<protein>
    <recommendedName>
        <fullName evidence="1">Pyridinium-3,5-bisthiocarboxylic acid mononucleotide nickel insertion protein</fullName>
        <shortName evidence="1">P2TMN nickel insertion protein</shortName>
        <ecNumber evidence="1">4.99.1.12</ecNumber>
    </recommendedName>
    <alternativeName>
        <fullName evidence="1">Nickel-pincer cofactor biosynthesis protein LarC</fullName>
    </alternativeName>
</protein>
<reference key="1">
    <citation type="journal article" date="2012" name="BMC Microbiol.">
        <title>Genome sequence of Desulfitobacterium hafniense DCB-2, a Gram-positive anaerobe capable of dehalogenation and metal reduction.</title>
        <authorList>
            <person name="Kim S.H."/>
            <person name="Harzman C."/>
            <person name="Davis J.K."/>
            <person name="Hutcheson R."/>
            <person name="Broderick J.B."/>
            <person name="Marsh T.L."/>
            <person name="Tiedje J.M."/>
        </authorList>
    </citation>
    <scope>NUCLEOTIDE SEQUENCE [LARGE SCALE GENOMIC DNA]</scope>
    <source>
        <strain>DSM 10664 / DCB-2</strain>
    </source>
</reference>